<feature type="chain" id="PRO_0000391634" description="Secreted effector protein PipB">
    <location>
        <begin position="1"/>
        <end position="291"/>
    </location>
</feature>
<feature type="domain" description="Pentapeptide repeat 1">
    <location>
        <begin position="154"/>
        <end position="193"/>
    </location>
</feature>
<feature type="domain" description="Pentapeptide repeat 2">
    <location>
        <begin position="199"/>
        <end position="238"/>
    </location>
</feature>
<organism>
    <name type="scientific">Salmonella typhimurium (strain LT2 / SGSC1412 / ATCC 700720)</name>
    <dbReference type="NCBI Taxonomy" id="99287"/>
    <lineage>
        <taxon>Bacteria</taxon>
        <taxon>Pseudomonadati</taxon>
        <taxon>Pseudomonadota</taxon>
        <taxon>Gammaproteobacteria</taxon>
        <taxon>Enterobacterales</taxon>
        <taxon>Enterobacteriaceae</taxon>
        <taxon>Salmonella</taxon>
    </lineage>
</organism>
<evidence type="ECO:0000269" key="1">
    <source>
    </source>
</evidence>
<evidence type="ECO:0000269" key="2">
    <source>
    </source>
</evidence>
<sequence length="291" mass="31805">MPITNASPENILRYLHAAGTGTKEAMKSATSPRGILEWFVNFFTCGGVRRSNERWFREVIGKLTTSLLYVNKNAFFDGNKIFLEDVNGCTICLSCGAASENTDPMVIIEVNKNGKTVTDKVDSERFWNVCRMLKLMSKHNIQQPDSLITEDGFLNLRGVNLAHKDFQGEDLSKIDASNADFRETTLSNVNLVGANLCCANLHAVNLMGSNMTKANLTHADLTCANMSGVNLTAAILFGSDLTDTKLNGAKLDKIALTLAKALTGADLTGSQHTPTPLPDYNDRTLFPHPIF</sequence>
<comment type="function">
    <text evidence="1">Effector proteins function to alter host cell physiology and promote bacterial survival in host tissues. Does not appear to be required for the formation or the maintenance of either Salmonella-containing vacuole (SCV) or the Salmonella-induced filaments (Sifs). Not required for intracellular replication in phagocytic cells.</text>
</comment>
<comment type="subcellular location">
    <subcellularLocation>
        <location evidence="1">Secreted</location>
    </subcellularLocation>
    <subcellularLocation>
        <location evidence="2">Host membrane</location>
    </subcellularLocation>
    <text evidence="1">Secreted via type III secretion system 2 (SPI-2 T3SS), and delivered into the host cell. Concentrates in detergent-resistant microdomains (DRMs) that are present on the membranes of Salmonella-containing vacuole (SCV) and Salmonella-induced filaments (Sifs).</text>
</comment>
<comment type="induction">
    <text evidence="1">Expression is regulated by the two-component regulatory system SsrA/SsrB. Induced after bacterial entry into host cell.</text>
</comment>
<protein>
    <recommendedName>
        <fullName>Secreted effector protein PipB</fullName>
    </recommendedName>
</protein>
<keyword id="KW-1043">Host membrane</keyword>
<keyword id="KW-0472">Membrane</keyword>
<keyword id="KW-1185">Reference proteome</keyword>
<keyword id="KW-0677">Repeat</keyword>
<keyword id="KW-0964">Secreted</keyword>
<keyword id="KW-0843">Virulence</keyword>
<accession>Q8ZQ59</accession>
<gene>
    <name type="primary">pipB</name>
    <name type="ordered locus">STM1088</name>
</gene>
<proteinExistence type="evidence at transcript level"/>
<name>PIPB_SALTY</name>
<dbReference type="EMBL" id="AE006468">
    <property type="protein sequence ID" value="AAL20020.1"/>
    <property type="molecule type" value="Genomic_DNA"/>
</dbReference>
<dbReference type="RefSeq" id="NP_460061.1">
    <property type="nucleotide sequence ID" value="NC_003197.2"/>
</dbReference>
<dbReference type="RefSeq" id="WP_001123045.1">
    <property type="nucleotide sequence ID" value="NC_003197.2"/>
</dbReference>
<dbReference type="SMR" id="Q8ZQ59"/>
<dbReference type="STRING" id="99287.STM1088"/>
<dbReference type="PaxDb" id="99287-STM1088"/>
<dbReference type="GeneID" id="1252606"/>
<dbReference type="KEGG" id="stm:STM1088"/>
<dbReference type="PATRIC" id="fig|99287.12.peg.1152"/>
<dbReference type="HOGENOM" id="CLU_067808_0_0_6"/>
<dbReference type="OMA" id="SNERCFR"/>
<dbReference type="PhylomeDB" id="Q8ZQ59"/>
<dbReference type="BioCyc" id="SENT99287:STM1088-MONOMER"/>
<dbReference type="Proteomes" id="UP000001014">
    <property type="component" value="Chromosome"/>
</dbReference>
<dbReference type="GO" id="GO:0005576">
    <property type="term" value="C:extracellular region"/>
    <property type="evidence" value="ECO:0007669"/>
    <property type="project" value="UniProtKB-SubCell"/>
</dbReference>
<dbReference type="GO" id="GO:0043657">
    <property type="term" value="C:host cell"/>
    <property type="evidence" value="ECO:0000314"/>
    <property type="project" value="UniProtKB"/>
</dbReference>
<dbReference type="GO" id="GO:0033644">
    <property type="term" value="C:host cell membrane"/>
    <property type="evidence" value="ECO:0007669"/>
    <property type="project" value="UniProtKB-SubCell"/>
</dbReference>
<dbReference type="GO" id="GO:0016020">
    <property type="term" value="C:membrane"/>
    <property type="evidence" value="ECO:0007669"/>
    <property type="project" value="UniProtKB-KW"/>
</dbReference>
<dbReference type="GO" id="GO:0030254">
    <property type="term" value="P:protein secretion by the type III secretion system"/>
    <property type="evidence" value="ECO:0000314"/>
    <property type="project" value="UniProtKB"/>
</dbReference>
<dbReference type="FunFam" id="2.160.20.80:FF:000007">
    <property type="entry name" value="SPI-2 type III secretion system effector PipB"/>
    <property type="match status" value="1"/>
</dbReference>
<dbReference type="Gene3D" id="2.160.20.80">
    <property type="entry name" value="E3 ubiquitin-protein ligase SopA"/>
    <property type="match status" value="1"/>
</dbReference>
<dbReference type="Gene3D" id="3.30.2450.10">
    <property type="entry name" value="Secreted effector protein pipB2"/>
    <property type="match status" value="1"/>
</dbReference>
<dbReference type="InterPro" id="IPR001646">
    <property type="entry name" value="5peptide_repeat"/>
</dbReference>
<dbReference type="InterPro" id="IPR051082">
    <property type="entry name" value="Pentapeptide-BTB/POZ_domain"/>
</dbReference>
<dbReference type="InterPro" id="IPR048984">
    <property type="entry name" value="PipB2_N"/>
</dbReference>
<dbReference type="NCBIfam" id="NF011744">
    <property type="entry name" value="PRK15197.1"/>
    <property type="match status" value="1"/>
</dbReference>
<dbReference type="PANTHER" id="PTHR14136">
    <property type="entry name" value="BTB_POZ DOMAIN-CONTAINING PROTEIN KCTD9"/>
    <property type="match status" value="1"/>
</dbReference>
<dbReference type="PANTHER" id="PTHR14136:SF17">
    <property type="entry name" value="BTB_POZ DOMAIN-CONTAINING PROTEIN KCTD9"/>
    <property type="match status" value="1"/>
</dbReference>
<dbReference type="Pfam" id="PF00805">
    <property type="entry name" value="Pentapeptide"/>
    <property type="match status" value="2"/>
</dbReference>
<dbReference type="Pfam" id="PF21684">
    <property type="entry name" value="PipB2_N"/>
    <property type="match status" value="1"/>
</dbReference>
<dbReference type="SUPFAM" id="SSF141571">
    <property type="entry name" value="Pentapeptide repeat-like"/>
    <property type="match status" value="1"/>
</dbReference>
<reference key="1">
    <citation type="journal article" date="2001" name="Nature">
        <title>Complete genome sequence of Salmonella enterica serovar Typhimurium LT2.</title>
        <authorList>
            <person name="McClelland M."/>
            <person name="Sanderson K.E."/>
            <person name="Spieth J."/>
            <person name="Clifton S.W."/>
            <person name="Latreille P."/>
            <person name="Courtney L."/>
            <person name="Porwollik S."/>
            <person name="Ali J."/>
            <person name="Dante M."/>
            <person name="Du F."/>
            <person name="Hou S."/>
            <person name="Layman D."/>
            <person name="Leonard S."/>
            <person name="Nguyen C."/>
            <person name="Scott K."/>
            <person name="Holmes A."/>
            <person name="Grewal N."/>
            <person name="Mulvaney E."/>
            <person name="Ryan E."/>
            <person name="Sun H."/>
            <person name="Florea L."/>
            <person name="Miller W."/>
            <person name="Stoneking T."/>
            <person name="Nhan M."/>
            <person name="Waterston R."/>
            <person name="Wilson R.K."/>
        </authorList>
    </citation>
    <scope>NUCLEOTIDE SEQUENCE [LARGE SCALE GENOMIC DNA]</scope>
    <source>
        <strain>LT2 / SGSC1412 / ATCC 700720</strain>
    </source>
</reference>
<reference key="2">
    <citation type="journal article" date="2002" name="Mol. Microbiol.">
        <title>Salmonella effectors within a single pathogenicity island are differentially expressed and translocated by separate type III secretion systems.</title>
        <authorList>
            <person name="Knodler L.A."/>
            <person name="Celli J."/>
            <person name="Hardt W.D."/>
            <person name="Vallance B.A."/>
            <person name="Yip C."/>
            <person name="Finlay B.B."/>
        </authorList>
    </citation>
    <scope>FUNCTION</scope>
    <scope>SUBCELLULAR LOCATION</scope>
    <scope>SECRETION VIA TYPE III SECRETION SYSTEM</scope>
    <scope>INDUCTION</scope>
    <source>
        <strain>SL1344</strain>
    </source>
</reference>
<reference key="3">
    <citation type="journal article" date="2003" name="Mol. Microbiol.">
        <title>Salmonella type III effectors PipB and PipB2 are targeted to detergent-resistant microdomains on internal host cell membranes.</title>
        <authorList>
            <person name="Knodler L.A."/>
            <person name="Vallance B.A."/>
            <person name="Hensel M."/>
            <person name="Jaeckel D."/>
            <person name="Finlay B.B."/>
            <person name="Steele-Mortimer O."/>
        </authorList>
    </citation>
    <scope>SUBCELLULAR LOCATION</scope>
    <source>
        <strain>SL1344</strain>
    </source>
</reference>